<protein>
    <recommendedName>
        <fullName evidence="1">Lipoprotein signal peptidase</fullName>
        <ecNumber evidence="1">3.4.23.36</ecNumber>
    </recommendedName>
    <alternativeName>
        <fullName evidence="1">Prolipoprotein signal peptidase</fullName>
    </alternativeName>
    <alternativeName>
        <fullName evidence="1">Signal peptidase II</fullName>
        <shortName evidence="1">SPase II</shortName>
    </alternativeName>
</protein>
<proteinExistence type="inferred from homology"/>
<accession>Q8EBI5</accession>
<keyword id="KW-0064">Aspartyl protease</keyword>
<keyword id="KW-0997">Cell inner membrane</keyword>
<keyword id="KW-1003">Cell membrane</keyword>
<keyword id="KW-0378">Hydrolase</keyword>
<keyword id="KW-0472">Membrane</keyword>
<keyword id="KW-0645">Protease</keyword>
<keyword id="KW-1185">Reference proteome</keyword>
<keyword id="KW-0812">Transmembrane</keyword>
<keyword id="KW-1133">Transmembrane helix</keyword>
<evidence type="ECO:0000255" key="1">
    <source>
        <dbReference type="HAMAP-Rule" id="MF_00161"/>
    </source>
</evidence>
<feature type="chain" id="PRO_0000289420" description="Lipoprotein signal peptidase">
    <location>
        <begin position="1"/>
        <end position="170"/>
    </location>
</feature>
<feature type="transmembrane region" description="Helical" evidence="1">
    <location>
        <begin position="12"/>
        <end position="32"/>
    </location>
</feature>
<feature type="transmembrane region" description="Helical" evidence="1">
    <location>
        <begin position="67"/>
        <end position="87"/>
    </location>
</feature>
<feature type="transmembrane region" description="Helical" evidence="1">
    <location>
        <begin position="93"/>
        <end position="113"/>
    </location>
</feature>
<feature type="transmembrane region" description="Helical" evidence="1">
    <location>
        <begin position="137"/>
        <end position="157"/>
    </location>
</feature>
<feature type="active site" evidence="1">
    <location>
        <position position="123"/>
    </location>
</feature>
<feature type="active site" evidence="1">
    <location>
        <position position="141"/>
    </location>
</feature>
<dbReference type="EC" id="3.4.23.36" evidence="1"/>
<dbReference type="EMBL" id="AE014299">
    <property type="protein sequence ID" value="AAN56522.1"/>
    <property type="molecule type" value="Genomic_DNA"/>
</dbReference>
<dbReference type="RefSeq" id="NP_719078.1">
    <property type="nucleotide sequence ID" value="NC_004347.2"/>
</dbReference>
<dbReference type="RefSeq" id="WP_011073364.1">
    <property type="nucleotide sequence ID" value="NC_004347.2"/>
</dbReference>
<dbReference type="SMR" id="Q8EBI5"/>
<dbReference type="STRING" id="211586.SO_3531"/>
<dbReference type="MEROPS" id="A08.001"/>
<dbReference type="PaxDb" id="211586-SO_3531"/>
<dbReference type="KEGG" id="son:SO_3531"/>
<dbReference type="PATRIC" id="fig|211586.12.peg.3427"/>
<dbReference type="eggNOG" id="COG0597">
    <property type="taxonomic scope" value="Bacteria"/>
</dbReference>
<dbReference type="HOGENOM" id="CLU_083252_4_0_6"/>
<dbReference type="OrthoDB" id="9810259at2"/>
<dbReference type="PhylomeDB" id="Q8EBI5"/>
<dbReference type="BioCyc" id="SONE211586:G1GMP-3293-MONOMER"/>
<dbReference type="UniPathway" id="UPA00665"/>
<dbReference type="Proteomes" id="UP000008186">
    <property type="component" value="Chromosome"/>
</dbReference>
<dbReference type="GO" id="GO:0005886">
    <property type="term" value="C:plasma membrane"/>
    <property type="evidence" value="ECO:0000318"/>
    <property type="project" value="GO_Central"/>
</dbReference>
<dbReference type="GO" id="GO:0004190">
    <property type="term" value="F:aspartic-type endopeptidase activity"/>
    <property type="evidence" value="ECO:0007669"/>
    <property type="project" value="UniProtKB-UniRule"/>
</dbReference>
<dbReference type="GO" id="GO:0004175">
    <property type="term" value="F:endopeptidase activity"/>
    <property type="evidence" value="ECO:0000318"/>
    <property type="project" value="GO_Central"/>
</dbReference>
<dbReference type="GO" id="GO:0006508">
    <property type="term" value="P:proteolysis"/>
    <property type="evidence" value="ECO:0007669"/>
    <property type="project" value="UniProtKB-KW"/>
</dbReference>
<dbReference type="HAMAP" id="MF_00161">
    <property type="entry name" value="LspA"/>
    <property type="match status" value="1"/>
</dbReference>
<dbReference type="InterPro" id="IPR001872">
    <property type="entry name" value="Peptidase_A8"/>
</dbReference>
<dbReference type="NCBIfam" id="TIGR00077">
    <property type="entry name" value="lspA"/>
    <property type="match status" value="1"/>
</dbReference>
<dbReference type="PANTHER" id="PTHR33695">
    <property type="entry name" value="LIPOPROTEIN SIGNAL PEPTIDASE"/>
    <property type="match status" value="1"/>
</dbReference>
<dbReference type="PANTHER" id="PTHR33695:SF1">
    <property type="entry name" value="LIPOPROTEIN SIGNAL PEPTIDASE"/>
    <property type="match status" value="1"/>
</dbReference>
<dbReference type="Pfam" id="PF01252">
    <property type="entry name" value="Peptidase_A8"/>
    <property type="match status" value="1"/>
</dbReference>
<dbReference type="PRINTS" id="PR00781">
    <property type="entry name" value="LIPOSIGPTASE"/>
</dbReference>
<dbReference type="PROSITE" id="PS00855">
    <property type="entry name" value="SPASE_II"/>
    <property type="match status" value="1"/>
</dbReference>
<comment type="function">
    <text evidence="1">This protein specifically catalyzes the removal of signal peptides from prolipoproteins.</text>
</comment>
<comment type="catalytic activity">
    <reaction evidence="1">
        <text>Release of signal peptides from bacterial membrane prolipoproteins. Hydrolyzes -Xaa-Yaa-Zaa-|-(S,diacylglyceryl)Cys-, in which Xaa is hydrophobic (preferably Leu), and Yaa (Ala or Ser) and Zaa (Gly or Ala) have small, neutral side chains.</text>
        <dbReference type="EC" id="3.4.23.36"/>
    </reaction>
</comment>
<comment type="pathway">
    <text evidence="1">Protein modification; lipoprotein biosynthesis (signal peptide cleavage).</text>
</comment>
<comment type="subcellular location">
    <subcellularLocation>
        <location evidence="1">Cell inner membrane</location>
        <topology evidence="1">Multi-pass membrane protein</topology>
    </subcellularLocation>
</comment>
<comment type="similarity">
    <text evidence="1">Belongs to the peptidase A8 family.</text>
</comment>
<name>LSPA_SHEON</name>
<reference key="1">
    <citation type="journal article" date="2002" name="Nat. Biotechnol.">
        <title>Genome sequence of the dissimilatory metal ion-reducing bacterium Shewanella oneidensis.</title>
        <authorList>
            <person name="Heidelberg J.F."/>
            <person name="Paulsen I.T."/>
            <person name="Nelson K.E."/>
            <person name="Gaidos E.J."/>
            <person name="Nelson W.C."/>
            <person name="Read T.D."/>
            <person name="Eisen J.A."/>
            <person name="Seshadri R."/>
            <person name="Ward N.L."/>
            <person name="Methe B.A."/>
            <person name="Clayton R.A."/>
            <person name="Meyer T."/>
            <person name="Tsapin A."/>
            <person name="Scott J."/>
            <person name="Beanan M.J."/>
            <person name="Brinkac L.M."/>
            <person name="Daugherty S.C."/>
            <person name="DeBoy R.T."/>
            <person name="Dodson R.J."/>
            <person name="Durkin A.S."/>
            <person name="Haft D.H."/>
            <person name="Kolonay J.F."/>
            <person name="Madupu R."/>
            <person name="Peterson J.D."/>
            <person name="Umayam L.A."/>
            <person name="White O."/>
            <person name="Wolf A.M."/>
            <person name="Vamathevan J.J."/>
            <person name="Weidman J.F."/>
            <person name="Impraim M."/>
            <person name="Lee K."/>
            <person name="Berry K.J."/>
            <person name="Lee C."/>
            <person name="Mueller J."/>
            <person name="Khouri H.M."/>
            <person name="Gill J."/>
            <person name="Utterback T.R."/>
            <person name="McDonald L.A."/>
            <person name="Feldblyum T.V."/>
            <person name="Smith H.O."/>
            <person name="Venter J.C."/>
            <person name="Nealson K.H."/>
            <person name="Fraser C.M."/>
        </authorList>
    </citation>
    <scope>NUCLEOTIDE SEQUENCE [LARGE SCALE GENOMIC DNA]</scope>
    <source>
        <strain>ATCC 700550 / JCM 31522 / CIP 106686 / LMG 19005 / NCIMB 14063 / MR-1</strain>
    </source>
</reference>
<gene>
    <name evidence="1" type="primary">lspA</name>
    <name type="ordered locus">SO_3531</name>
</gene>
<sequence>MPLTWKDSGLRWYWVVVLVFLADQLSKQWVLANFDLFESVQLLPFFNFTYVRNYGAAFSFLSEAGGWQRWLFTIVAVGFSSLLTVWLRKQSASLLKLNLAYTLVIGGALGNLVDRLMHGFVVDFIDFYWGKSHYPAFNIADSAIFIGAVLIIWDSFFNSQSEQDKTEEVK</sequence>
<organism>
    <name type="scientific">Shewanella oneidensis (strain ATCC 700550 / JCM 31522 / CIP 106686 / LMG 19005 / NCIMB 14063 / MR-1)</name>
    <dbReference type="NCBI Taxonomy" id="211586"/>
    <lineage>
        <taxon>Bacteria</taxon>
        <taxon>Pseudomonadati</taxon>
        <taxon>Pseudomonadota</taxon>
        <taxon>Gammaproteobacteria</taxon>
        <taxon>Alteromonadales</taxon>
        <taxon>Shewanellaceae</taxon>
        <taxon>Shewanella</taxon>
    </lineage>
</organism>